<protein>
    <recommendedName>
        <fullName>Succinate dehydrogenase iron-sulfur subunit</fullName>
        <ecNumber>1.3.5.1</ecNumber>
    </recommendedName>
</protein>
<gene>
    <name type="primary">sdhB</name>
    <name type="ordered locus">BSU28430</name>
</gene>
<reference key="1">
    <citation type="journal article" date="1987" name="J. Bacteriol.">
        <title>Nucleotide sequence encoding the flavoprotein and iron-sulfur protein subunits of the Bacillus subtilis PY79 succinate dehydrogenase complex.</title>
        <authorList>
            <person name="Phillips M.K."/>
            <person name="Hederstedt L."/>
            <person name="Hasnain S."/>
            <person name="Rutberg L."/>
            <person name="Guest J.R."/>
        </authorList>
    </citation>
    <scope>NUCLEOTIDE SEQUENCE [GENOMIC DNA]</scope>
    <source>
        <strain>168 / PY79</strain>
    </source>
</reference>
<reference key="2">
    <citation type="journal article" date="1996" name="Microbiology">
        <title>The dnaB-pheA (256 degrees-240 degrees) region of the Bacillus subtilis chromosome containing genes responsible for stress responses, the utilization of plant cell walls and primary metabolism.</title>
        <authorList>
            <person name="Wipat A."/>
            <person name="Carter N."/>
            <person name="Brignell C.S."/>
            <person name="Guy J.B."/>
            <person name="Piper K."/>
            <person name="Sanders J."/>
            <person name="Emmerson P.T."/>
            <person name="Harwood C.R."/>
        </authorList>
    </citation>
    <scope>NUCLEOTIDE SEQUENCE [GENOMIC DNA]</scope>
    <source>
        <strain>168</strain>
    </source>
</reference>
<reference key="3">
    <citation type="journal article" date="1997" name="Nature">
        <title>The complete genome sequence of the Gram-positive bacterium Bacillus subtilis.</title>
        <authorList>
            <person name="Kunst F."/>
            <person name="Ogasawara N."/>
            <person name="Moszer I."/>
            <person name="Albertini A.M."/>
            <person name="Alloni G."/>
            <person name="Azevedo V."/>
            <person name="Bertero M.G."/>
            <person name="Bessieres P."/>
            <person name="Bolotin A."/>
            <person name="Borchert S."/>
            <person name="Borriss R."/>
            <person name="Boursier L."/>
            <person name="Brans A."/>
            <person name="Braun M."/>
            <person name="Brignell S.C."/>
            <person name="Bron S."/>
            <person name="Brouillet S."/>
            <person name="Bruschi C.V."/>
            <person name="Caldwell B."/>
            <person name="Capuano V."/>
            <person name="Carter N.M."/>
            <person name="Choi S.-K."/>
            <person name="Codani J.-J."/>
            <person name="Connerton I.F."/>
            <person name="Cummings N.J."/>
            <person name="Daniel R.A."/>
            <person name="Denizot F."/>
            <person name="Devine K.M."/>
            <person name="Duesterhoeft A."/>
            <person name="Ehrlich S.D."/>
            <person name="Emmerson P.T."/>
            <person name="Entian K.-D."/>
            <person name="Errington J."/>
            <person name="Fabret C."/>
            <person name="Ferrari E."/>
            <person name="Foulger D."/>
            <person name="Fritz C."/>
            <person name="Fujita M."/>
            <person name="Fujita Y."/>
            <person name="Fuma S."/>
            <person name="Galizzi A."/>
            <person name="Galleron N."/>
            <person name="Ghim S.-Y."/>
            <person name="Glaser P."/>
            <person name="Goffeau A."/>
            <person name="Golightly E.J."/>
            <person name="Grandi G."/>
            <person name="Guiseppi G."/>
            <person name="Guy B.J."/>
            <person name="Haga K."/>
            <person name="Haiech J."/>
            <person name="Harwood C.R."/>
            <person name="Henaut A."/>
            <person name="Hilbert H."/>
            <person name="Holsappel S."/>
            <person name="Hosono S."/>
            <person name="Hullo M.-F."/>
            <person name="Itaya M."/>
            <person name="Jones L.-M."/>
            <person name="Joris B."/>
            <person name="Karamata D."/>
            <person name="Kasahara Y."/>
            <person name="Klaerr-Blanchard M."/>
            <person name="Klein C."/>
            <person name="Kobayashi Y."/>
            <person name="Koetter P."/>
            <person name="Koningstein G."/>
            <person name="Krogh S."/>
            <person name="Kumano M."/>
            <person name="Kurita K."/>
            <person name="Lapidus A."/>
            <person name="Lardinois S."/>
            <person name="Lauber J."/>
            <person name="Lazarevic V."/>
            <person name="Lee S.-M."/>
            <person name="Levine A."/>
            <person name="Liu H."/>
            <person name="Masuda S."/>
            <person name="Mauel C."/>
            <person name="Medigue C."/>
            <person name="Medina N."/>
            <person name="Mellado R.P."/>
            <person name="Mizuno M."/>
            <person name="Moestl D."/>
            <person name="Nakai S."/>
            <person name="Noback M."/>
            <person name="Noone D."/>
            <person name="O'Reilly M."/>
            <person name="Ogawa K."/>
            <person name="Ogiwara A."/>
            <person name="Oudega B."/>
            <person name="Park S.-H."/>
            <person name="Parro V."/>
            <person name="Pohl T.M."/>
            <person name="Portetelle D."/>
            <person name="Porwollik S."/>
            <person name="Prescott A.M."/>
            <person name="Presecan E."/>
            <person name="Pujic P."/>
            <person name="Purnelle B."/>
            <person name="Rapoport G."/>
            <person name="Rey M."/>
            <person name="Reynolds S."/>
            <person name="Rieger M."/>
            <person name="Rivolta C."/>
            <person name="Rocha E."/>
            <person name="Roche B."/>
            <person name="Rose M."/>
            <person name="Sadaie Y."/>
            <person name="Sato T."/>
            <person name="Scanlan E."/>
            <person name="Schleich S."/>
            <person name="Schroeter R."/>
            <person name="Scoffone F."/>
            <person name="Sekiguchi J."/>
            <person name="Sekowska A."/>
            <person name="Seror S.J."/>
            <person name="Serror P."/>
            <person name="Shin B.-S."/>
            <person name="Soldo B."/>
            <person name="Sorokin A."/>
            <person name="Tacconi E."/>
            <person name="Takagi T."/>
            <person name="Takahashi H."/>
            <person name="Takemaru K."/>
            <person name="Takeuchi M."/>
            <person name="Tamakoshi A."/>
            <person name="Tanaka T."/>
            <person name="Terpstra P."/>
            <person name="Tognoni A."/>
            <person name="Tosato V."/>
            <person name="Uchiyama S."/>
            <person name="Vandenbol M."/>
            <person name="Vannier F."/>
            <person name="Vassarotti A."/>
            <person name="Viari A."/>
            <person name="Wambutt R."/>
            <person name="Wedler E."/>
            <person name="Wedler H."/>
            <person name="Weitzenegger T."/>
            <person name="Winters P."/>
            <person name="Wipat A."/>
            <person name="Yamamoto H."/>
            <person name="Yamane K."/>
            <person name="Yasumoto K."/>
            <person name="Yata K."/>
            <person name="Yoshida K."/>
            <person name="Yoshikawa H.-F."/>
            <person name="Zumstein E."/>
            <person name="Yoshikawa H."/>
            <person name="Danchin A."/>
        </authorList>
    </citation>
    <scope>NUCLEOTIDE SEQUENCE [LARGE SCALE GENOMIC DNA]</scope>
    <source>
        <strain>168</strain>
    </source>
</reference>
<reference key="4">
    <citation type="journal article" date="1986" name="J. Gen. Microbiol.">
        <title>The nucleotide sequence and the transcription during sporulation of the gerE gene of Bacillus subtilis.</title>
        <authorList>
            <person name="Cutting S.M."/>
            <person name="Mandelstam J."/>
        </authorList>
    </citation>
    <scope>NUCLEOTIDE SEQUENCE [GENOMIC DNA] OF 112-253</scope>
</reference>
<feature type="initiator methionine" description="Removed">
    <location>
        <position position="1"/>
    </location>
</feature>
<feature type="chain" id="PRO_0000158686" description="Succinate dehydrogenase iron-sulfur subunit">
    <location>
        <begin position="2"/>
        <end position="253"/>
    </location>
</feature>
<feature type="domain" description="4Fe-4S ferredoxin-type" evidence="2">
    <location>
        <begin position="146"/>
        <end position="174"/>
    </location>
</feature>
<feature type="binding site" evidence="1">
    <location>
        <position position="64"/>
    </location>
    <ligand>
        <name>[2Fe-2S] cluster</name>
        <dbReference type="ChEBI" id="CHEBI:190135"/>
    </ligand>
</feature>
<feature type="binding site" evidence="1">
    <location>
        <position position="69"/>
    </location>
    <ligand>
        <name>[2Fe-2S] cluster</name>
        <dbReference type="ChEBI" id="CHEBI:190135"/>
    </ligand>
</feature>
<feature type="binding site" evidence="1">
    <location>
        <position position="84"/>
    </location>
    <ligand>
        <name>[2Fe-2S] cluster</name>
        <dbReference type="ChEBI" id="CHEBI:190135"/>
    </ligand>
</feature>
<feature type="binding site" evidence="1">
    <location>
        <position position="155"/>
    </location>
    <ligand>
        <name>[4Fe-4S] cluster</name>
        <dbReference type="ChEBI" id="CHEBI:49883"/>
    </ligand>
</feature>
<feature type="binding site" evidence="1">
    <location>
        <position position="158"/>
    </location>
    <ligand>
        <name>[4Fe-4S] cluster</name>
        <dbReference type="ChEBI" id="CHEBI:49883"/>
    </ligand>
</feature>
<feature type="binding site" evidence="1">
    <location>
        <position position="161"/>
    </location>
    <ligand>
        <name>[4Fe-4S] cluster</name>
        <dbReference type="ChEBI" id="CHEBI:49883"/>
    </ligand>
</feature>
<feature type="binding site" evidence="1">
    <location>
        <position position="165"/>
    </location>
    <ligand>
        <name>[3Fe-4S] cluster</name>
        <dbReference type="ChEBI" id="CHEBI:21137"/>
    </ligand>
</feature>
<feature type="binding site" evidence="1">
    <location>
        <position position="212"/>
    </location>
    <ligand>
        <name>[3Fe-4S] cluster</name>
        <dbReference type="ChEBI" id="CHEBI:21137"/>
    </ligand>
</feature>
<feature type="binding site" evidence="1">
    <location>
        <position position="218"/>
    </location>
    <ligand>
        <name>[3Fe-4S] cluster</name>
        <dbReference type="ChEBI" id="CHEBI:21137"/>
    </ligand>
</feature>
<feature type="binding site" evidence="1">
    <location>
        <position position="222"/>
    </location>
    <ligand>
        <name>[4Fe-4S] cluster</name>
        <dbReference type="ChEBI" id="CHEBI:49883"/>
    </ligand>
</feature>
<keyword id="KW-0001">2Fe-2S</keyword>
<keyword id="KW-0003">3Fe-4S</keyword>
<keyword id="KW-0004">4Fe-4S</keyword>
<keyword id="KW-0249">Electron transport</keyword>
<keyword id="KW-0408">Iron</keyword>
<keyword id="KW-0411">Iron-sulfur</keyword>
<keyword id="KW-0479">Metal-binding</keyword>
<keyword id="KW-0560">Oxidoreductase</keyword>
<keyword id="KW-1185">Reference proteome</keyword>
<keyword id="KW-0813">Transport</keyword>
<keyword id="KW-0816">Tricarboxylic acid cycle</keyword>
<sequence>MSEQKTIRFIITRQDTADSTPYDEEFEIPYRPNLNVISALMEIRRNPVNVKGEKTTPVTWDMNCLEEVCGACSMVINGKPRQSCTALIDQLEQPIRLKPMKTFPVVRDLQVDRSRMFDSLKKVKAWIPIDGTYDLGPGPRMPEKRRQWAYELSKCMTCGVCLEACPNVNSKSKFMGPAPMSQVRLFNAHPTGAMNKSERLEALMDEGGLADCGNSQNCVQSCPKGIPLTTSIAALNRDTNLQAFRNFFGSDRV</sequence>
<comment type="catalytic activity">
    <reaction>
        <text>a quinone + succinate = fumarate + a quinol</text>
        <dbReference type="Rhea" id="RHEA:40523"/>
        <dbReference type="ChEBI" id="CHEBI:24646"/>
        <dbReference type="ChEBI" id="CHEBI:29806"/>
        <dbReference type="ChEBI" id="CHEBI:30031"/>
        <dbReference type="ChEBI" id="CHEBI:132124"/>
        <dbReference type="EC" id="1.3.5.1"/>
    </reaction>
</comment>
<comment type="cofactor">
    <cofactor>
        <name>[2Fe-2S] cluster</name>
        <dbReference type="ChEBI" id="CHEBI:190135"/>
    </cofactor>
    <text>Binds 1 [2Fe-2S] cluster.</text>
</comment>
<comment type="cofactor">
    <cofactor>
        <name>[3Fe-4S] cluster</name>
        <dbReference type="ChEBI" id="CHEBI:21137"/>
    </cofactor>
    <text>Binds 1 [3Fe-4S] cluster.</text>
</comment>
<comment type="cofactor">
    <cofactor>
        <name>[4Fe-4S] cluster</name>
        <dbReference type="ChEBI" id="CHEBI:49883"/>
    </cofactor>
    <text>Binds 1 [4Fe-4S] cluster.</text>
</comment>
<comment type="pathway">
    <text>Carbohydrate metabolism; tricarboxylic acid cycle; fumarate from succinate (bacterial route): step 1/1.</text>
</comment>
<comment type="subunit">
    <text>In B.subtilis succinate dehydrogenase forms part of an enzyme complex containing three subunits: a flavoprotein, an iron-sulfur protein and cytochrome b-558.</text>
</comment>
<comment type="similarity">
    <text evidence="3">Belongs to the succinate dehydrogenase/fumarate reductase iron-sulfur protein family.</text>
</comment>
<evidence type="ECO:0000250" key="1"/>
<evidence type="ECO:0000255" key="2">
    <source>
        <dbReference type="PROSITE-ProRule" id="PRU00711"/>
    </source>
</evidence>
<evidence type="ECO:0000305" key="3"/>
<accession>P08066</accession>
<organism>
    <name type="scientific">Bacillus subtilis (strain 168)</name>
    <dbReference type="NCBI Taxonomy" id="224308"/>
    <lineage>
        <taxon>Bacteria</taxon>
        <taxon>Bacillati</taxon>
        <taxon>Bacillota</taxon>
        <taxon>Bacilli</taxon>
        <taxon>Bacillales</taxon>
        <taxon>Bacillaceae</taxon>
        <taxon>Bacillus</taxon>
    </lineage>
</organism>
<name>SDHB_BACSU</name>
<dbReference type="EC" id="1.3.5.1"/>
<dbReference type="EMBL" id="M13470">
    <property type="protein sequence ID" value="AAA22747.1"/>
    <property type="molecule type" value="Genomic_DNA"/>
</dbReference>
<dbReference type="EMBL" id="Z75208">
    <property type="protein sequence ID" value="CAA99548.1"/>
    <property type="molecule type" value="Genomic_DNA"/>
</dbReference>
<dbReference type="EMBL" id="AL009126">
    <property type="protein sequence ID" value="CAB14803.1"/>
    <property type="molecule type" value="Genomic_DNA"/>
</dbReference>
<dbReference type="EMBL" id="M17642">
    <property type="protein sequence ID" value="AAA22471.1"/>
    <property type="molecule type" value="Genomic_DNA"/>
</dbReference>
<dbReference type="PIR" id="B27763">
    <property type="entry name" value="B27763"/>
</dbReference>
<dbReference type="RefSeq" id="NP_390721.1">
    <property type="nucleotide sequence ID" value="NC_000964.3"/>
</dbReference>
<dbReference type="RefSeq" id="WP_003229569.1">
    <property type="nucleotide sequence ID" value="NZ_OZ025638.1"/>
</dbReference>
<dbReference type="SMR" id="P08066"/>
<dbReference type="FunCoup" id="P08066">
    <property type="interactions" value="636"/>
</dbReference>
<dbReference type="STRING" id="224308.BSU28430"/>
<dbReference type="jPOST" id="P08066"/>
<dbReference type="PaxDb" id="224308-BSU28430"/>
<dbReference type="DNASU" id="937460"/>
<dbReference type="EnsemblBacteria" id="CAB14803">
    <property type="protein sequence ID" value="CAB14803"/>
    <property type="gene ID" value="BSU_28430"/>
</dbReference>
<dbReference type="GeneID" id="86872643"/>
<dbReference type="GeneID" id="937460"/>
<dbReference type="KEGG" id="bsu:BSU28430"/>
<dbReference type="PATRIC" id="fig|224308.179.peg.3088"/>
<dbReference type="eggNOG" id="COG0479">
    <property type="taxonomic scope" value="Bacteria"/>
</dbReference>
<dbReference type="InParanoid" id="P08066"/>
<dbReference type="OrthoDB" id="9804391at2"/>
<dbReference type="PhylomeDB" id="P08066"/>
<dbReference type="BioCyc" id="BSUB:BSU28430-MONOMER"/>
<dbReference type="BioCyc" id="MetaCyc:BSU28430-MONOMER"/>
<dbReference type="UniPathway" id="UPA00223">
    <property type="reaction ID" value="UER01005"/>
</dbReference>
<dbReference type="Proteomes" id="UP000001570">
    <property type="component" value="Chromosome"/>
</dbReference>
<dbReference type="GO" id="GO:0051537">
    <property type="term" value="F:2 iron, 2 sulfur cluster binding"/>
    <property type="evidence" value="ECO:0007669"/>
    <property type="project" value="UniProtKB-KW"/>
</dbReference>
<dbReference type="GO" id="GO:0051538">
    <property type="term" value="F:3 iron, 4 sulfur cluster binding"/>
    <property type="evidence" value="ECO:0007669"/>
    <property type="project" value="UniProtKB-KW"/>
</dbReference>
<dbReference type="GO" id="GO:0051539">
    <property type="term" value="F:4 iron, 4 sulfur cluster binding"/>
    <property type="evidence" value="ECO:0007669"/>
    <property type="project" value="UniProtKB-KW"/>
</dbReference>
<dbReference type="GO" id="GO:0009055">
    <property type="term" value="F:electron transfer activity"/>
    <property type="evidence" value="ECO:0007669"/>
    <property type="project" value="InterPro"/>
</dbReference>
<dbReference type="GO" id="GO:0046872">
    <property type="term" value="F:metal ion binding"/>
    <property type="evidence" value="ECO:0007669"/>
    <property type="project" value="UniProtKB-KW"/>
</dbReference>
<dbReference type="GO" id="GO:0008177">
    <property type="term" value="F:succinate dehydrogenase (quinone) activity"/>
    <property type="evidence" value="ECO:0007669"/>
    <property type="project" value="UniProtKB-EC"/>
</dbReference>
<dbReference type="GO" id="GO:0009060">
    <property type="term" value="P:aerobic respiration"/>
    <property type="evidence" value="ECO:0000318"/>
    <property type="project" value="GO_Central"/>
</dbReference>
<dbReference type="GO" id="GO:0022904">
    <property type="term" value="P:respiratory electron transport chain"/>
    <property type="evidence" value="ECO:0000318"/>
    <property type="project" value="GO_Central"/>
</dbReference>
<dbReference type="GO" id="GO:0006099">
    <property type="term" value="P:tricarboxylic acid cycle"/>
    <property type="evidence" value="ECO:0007669"/>
    <property type="project" value="UniProtKB-UniPathway"/>
</dbReference>
<dbReference type="FunFam" id="1.10.1060.10:FF:000005">
    <property type="entry name" value="Succinate dehydrogenase iron-sulfur subunit"/>
    <property type="match status" value="1"/>
</dbReference>
<dbReference type="FunFam" id="3.10.20.30:FF:000018">
    <property type="entry name" value="Succinate dehydrogenase iron-sulfur subunit"/>
    <property type="match status" value="1"/>
</dbReference>
<dbReference type="Gene3D" id="3.10.20.30">
    <property type="match status" value="1"/>
</dbReference>
<dbReference type="Gene3D" id="1.10.1060.10">
    <property type="entry name" value="Alpha-helical ferredoxin"/>
    <property type="match status" value="1"/>
</dbReference>
<dbReference type="InterPro" id="IPR036010">
    <property type="entry name" value="2Fe-2S_ferredoxin-like_sf"/>
</dbReference>
<dbReference type="InterPro" id="IPR017896">
    <property type="entry name" value="4Fe4S_Fe-S-bd"/>
</dbReference>
<dbReference type="InterPro" id="IPR017900">
    <property type="entry name" value="4Fe4S_Fe_S_CS"/>
</dbReference>
<dbReference type="InterPro" id="IPR012675">
    <property type="entry name" value="Beta-grasp_dom_sf"/>
</dbReference>
<dbReference type="InterPro" id="IPR009051">
    <property type="entry name" value="Helical_ferredxn"/>
</dbReference>
<dbReference type="InterPro" id="IPR050573">
    <property type="entry name" value="SDH/FRD_Iron-Sulfur"/>
</dbReference>
<dbReference type="InterPro" id="IPR004489">
    <property type="entry name" value="Succ_DH/fum_Rdtase_Fe-S"/>
</dbReference>
<dbReference type="InterPro" id="IPR025192">
    <property type="entry name" value="Succ_DH/fum_Rdtase_N"/>
</dbReference>
<dbReference type="NCBIfam" id="TIGR00384">
    <property type="entry name" value="dhsB"/>
    <property type="match status" value="1"/>
</dbReference>
<dbReference type="NCBIfam" id="NF006391">
    <property type="entry name" value="PRK08640.1"/>
    <property type="match status" value="1"/>
</dbReference>
<dbReference type="PANTHER" id="PTHR11921:SF29">
    <property type="entry name" value="SUCCINATE DEHYDROGENASE [UBIQUINONE] IRON-SULFUR SUBUNIT, MITOCHONDRIAL"/>
    <property type="match status" value="1"/>
</dbReference>
<dbReference type="PANTHER" id="PTHR11921">
    <property type="entry name" value="SUCCINATE DEHYDROGENASE IRON-SULFUR PROTEIN"/>
    <property type="match status" value="1"/>
</dbReference>
<dbReference type="Pfam" id="PF13085">
    <property type="entry name" value="Fer2_3"/>
    <property type="match status" value="1"/>
</dbReference>
<dbReference type="Pfam" id="PF13183">
    <property type="entry name" value="Fer4_8"/>
    <property type="match status" value="1"/>
</dbReference>
<dbReference type="SUPFAM" id="SSF54292">
    <property type="entry name" value="2Fe-2S ferredoxin-like"/>
    <property type="match status" value="1"/>
</dbReference>
<dbReference type="SUPFAM" id="SSF46548">
    <property type="entry name" value="alpha-helical ferredoxin"/>
    <property type="match status" value="1"/>
</dbReference>
<dbReference type="PROSITE" id="PS00198">
    <property type="entry name" value="4FE4S_FER_1"/>
    <property type="match status" value="1"/>
</dbReference>
<dbReference type="PROSITE" id="PS51379">
    <property type="entry name" value="4FE4S_FER_2"/>
    <property type="match status" value="1"/>
</dbReference>
<proteinExistence type="inferred from homology"/>